<evidence type="ECO:0000250" key="1">
    <source>
        <dbReference type="UniProtKB" id="P00403"/>
    </source>
</evidence>
<evidence type="ECO:0000250" key="2">
    <source>
        <dbReference type="UniProtKB" id="P00410"/>
    </source>
</evidence>
<evidence type="ECO:0000250" key="3">
    <source>
        <dbReference type="UniProtKB" id="P68530"/>
    </source>
</evidence>
<evidence type="ECO:0000305" key="4"/>
<dbReference type="EC" id="7.1.1.9"/>
<dbReference type="EMBL" id="DQ019091">
    <property type="protein sequence ID" value="ABA28365.1"/>
    <property type="molecule type" value="Genomic_DNA"/>
</dbReference>
<dbReference type="SMR" id="Q38S35"/>
<dbReference type="GO" id="GO:0005743">
    <property type="term" value="C:mitochondrial inner membrane"/>
    <property type="evidence" value="ECO:0007669"/>
    <property type="project" value="UniProtKB-SubCell"/>
</dbReference>
<dbReference type="GO" id="GO:0045277">
    <property type="term" value="C:respiratory chain complex IV"/>
    <property type="evidence" value="ECO:0000250"/>
    <property type="project" value="UniProtKB"/>
</dbReference>
<dbReference type="GO" id="GO:0005507">
    <property type="term" value="F:copper ion binding"/>
    <property type="evidence" value="ECO:0007669"/>
    <property type="project" value="InterPro"/>
</dbReference>
<dbReference type="GO" id="GO:0004129">
    <property type="term" value="F:cytochrome-c oxidase activity"/>
    <property type="evidence" value="ECO:0007669"/>
    <property type="project" value="UniProtKB-EC"/>
</dbReference>
<dbReference type="GO" id="GO:0042773">
    <property type="term" value="P:ATP synthesis coupled electron transport"/>
    <property type="evidence" value="ECO:0007669"/>
    <property type="project" value="TreeGrafter"/>
</dbReference>
<dbReference type="CDD" id="cd13912">
    <property type="entry name" value="CcO_II_C"/>
    <property type="match status" value="1"/>
</dbReference>
<dbReference type="FunFam" id="1.10.287.90:FF:000001">
    <property type="entry name" value="Cytochrome c oxidase subunit 2"/>
    <property type="match status" value="1"/>
</dbReference>
<dbReference type="FunFam" id="2.60.40.420:FF:000001">
    <property type="entry name" value="Cytochrome c oxidase subunit 2"/>
    <property type="match status" value="1"/>
</dbReference>
<dbReference type="Gene3D" id="1.10.287.90">
    <property type="match status" value="1"/>
</dbReference>
<dbReference type="Gene3D" id="2.60.40.420">
    <property type="entry name" value="Cupredoxins - blue copper proteins"/>
    <property type="match status" value="1"/>
</dbReference>
<dbReference type="InterPro" id="IPR045187">
    <property type="entry name" value="CcO_II"/>
</dbReference>
<dbReference type="InterPro" id="IPR002429">
    <property type="entry name" value="CcO_II-like_C"/>
</dbReference>
<dbReference type="InterPro" id="IPR034210">
    <property type="entry name" value="CcO_II_C"/>
</dbReference>
<dbReference type="InterPro" id="IPR001505">
    <property type="entry name" value="Copper_CuA"/>
</dbReference>
<dbReference type="InterPro" id="IPR008972">
    <property type="entry name" value="Cupredoxin"/>
</dbReference>
<dbReference type="InterPro" id="IPR014222">
    <property type="entry name" value="Cyt_c_oxidase_su2"/>
</dbReference>
<dbReference type="InterPro" id="IPR011759">
    <property type="entry name" value="Cyt_c_oxidase_su2_TM_dom"/>
</dbReference>
<dbReference type="InterPro" id="IPR036257">
    <property type="entry name" value="Cyt_c_oxidase_su2_TM_sf"/>
</dbReference>
<dbReference type="NCBIfam" id="TIGR02866">
    <property type="entry name" value="CoxB"/>
    <property type="match status" value="1"/>
</dbReference>
<dbReference type="PANTHER" id="PTHR22888:SF9">
    <property type="entry name" value="CYTOCHROME C OXIDASE SUBUNIT 2"/>
    <property type="match status" value="1"/>
</dbReference>
<dbReference type="PANTHER" id="PTHR22888">
    <property type="entry name" value="CYTOCHROME C OXIDASE, SUBUNIT II"/>
    <property type="match status" value="1"/>
</dbReference>
<dbReference type="Pfam" id="PF00116">
    <property type="entry name" value="COX2"/>
    <property type="match status" value="1"/>
</dbReference>
<dbReference type="Pfam" id="PF02790">
    <property type="entry name" value="COX2_TM"/>
    <property type="match status" value="1"/>
</dbReference>
<dbReference type="PRINTS" id="PR01166">
    <property type="entry name" value="CYCOXIDASEII"/>
</dbReference>
<dbReference type="SUPFAM" id="SSF49503">
    <property type="entry name" value="Cupredoxins"/>
    <property type="match status" value="1"/>
</dbReference>
<dbReference type="SUPFAM" id="SSF81464">
    <property type="entry name" value="Cytochrome c oxidase subunit II-like, transmembrane region"/>
    <property type="match status" value="1"/>
</dbReference>
<dbReference type="PROSITE" id="PS00078">
    <property type="entry name" value="COX2"/>
    <property type="match status" value="1"/>
</dbReference>
<dbReference type="PROSITE" id="PS50857">
    <property type="entry name" value="COX2_CUA"/>
    <property type="match status" value="1"/>
</dbReference>
<dbReference type="PROSITE" id="PS50999">
    <property type="entry name" value="COX2_TM"/>
    <property type="match status" value="1"/>
</dbReference>
<comment type="function">
    <text evidence="2">Component of the cytochrome c oxidase, the last enzyme in the mitochondrial electron transport chain which drives oxidative phosphorylation. The respiratory chain contains 3 multisubunit complexes succinate dehydrogenase (complex II, CII), ubiquinol-cytochrome c oxidoreductase (cytochrome b-c1 complex, complex III, CIII) and cytochrome c oxidase (complex IV, CIV), that cooperate to transfer electrons derived from NADH and succinate to molecular oxygen, creating an electrochemical gradient over the inner membrane that drives transmembrane transport and the ATP synthase. Cytochrome c oxidase is the component of the respiratory chain that catalyzes the reduction of oxygen to water. Electrons originating from reduced cytochrome c in the intermembrane space (IMS) are transferred via the dinuclear copper A center (CU(A)) of subunit 2 and heme A of subunit 1 to the active site in subunit 1, a binuclear center (BNC) formed by heme A3 and copper B (CU(B)). The BNC reduces molecular oxygen to 2 water molecules using 4 electrons from cytochrome c in the IMS and 4 protons from the mitochondrial matrix.</text>
</comment>
<comment type="catalytic activity">
    <reaction evidence="2">
        <text>4 Fe(II)-[cytochrome c] + O2 + 8 H(+)(in) = 4 Fe(III)-[cytochrome c] + 2 H2O + 4 H(+)(out)</text>
        <dbReference type="Rhea" id="RHEA:11436"/>
        <dbReference type="Rhea" id="RHEA-COMP:10350"/>
        <dbReference type="Rhea" id="RHEA-COMP:14399"/>
        <dbReference type="ChEBI" id="CHEBI:15377"/>
        <dbReference type="ChEBI" id="CHEBI:15378"/>
        <dbReference type="ChEBI" id="CHEBI:15379"/>
        <dbReference type="ChEBI" id="CHEBI:29033"/>
        <dbReference type="ChEBI" id="CHEBI:29034"/>
        <dbReference type="EC" id="7.1.1.9"/>
    </reaction>
    <physiologicalReaction direction="left-to-right" evidence="2">
        <dbReference type="Rhea" id="RHEA:11437"/>
    </physiologicalReaction>
</comment>
<comment type="cofactor">
    <cofactor evidence="3">
        <name>Cu cation</name>
        <dbReference type="ChEBI" id="CHEBI:23378"/>
    </cofactor>
    <text evidence="3">Binds a dinuclear copper A center per subunit.</text>
</comment>
<comment type="subunit">
    <text evidence="1 3">Component of the cytochrome c oxidase (complex IV, CIV), a multisubunit enzyme composed of 14 subunits. The complex is composed of a catalytic core of 3 subunits MT-CO1, MT-CO2 and MT-CO3, encoded in the mitochondrial DNA, and 11 supernumerary subunits COX4I, COX5A, COX5B, COX6A, COX6B, COX6C, COX7A, COX7B, COX7C, COX8 and NDUFA4, which are encoded in the nuclear genome. The complex exists as a monomer or a dimer and forms supercomplexes (SCs) in the inner mitochondrial membrane with NADH-ubiquinone oxidoreductase (complex I, CI) and ubiquinol-cytochrome c oxidoreductase (cytochrome b-c1 complex, complex III, CIII), resulting in different assemblies (supercomplex SCI(1)III(2)IV(1) and megacomplex MCI(2)III(2)IV(2)) (By similarity). Found in a complex with TMEM177, COA6, COX18, COX20, SCO1 and SCO2. Interacts with TMEM177 in a COX20-dependent manner. Interacts with COX20. Interacts with COX16 (By similarity).</text>
</comment>
<comment type="subcellular location">
    <subcellularLocation>
        <location evidence="3">Mitochondrion inner membrane</location>
        <topology evidence="3">Multi-pass membrane protein</topology>
    </subcellularLocation>
</comment>
<comment type="similarity">
    <text evidence="4">Belongs to the cytochrome c oxidase subunit 2 family.</text>
</comment>
<organism>
    <name type="scientific">Apodemus mystacinus</name>
    <name type="common">Broad-toothed field mouse</name>
    <dbReference type="NCBI Taxonomy" id="100382"/>
    <lineage>
        <taxon>Eukaryota</taxon>
        <taxon>Metazoa</taxon>
        <taxon>Chordata</taxon>
        <taxon>Craniata</taxon>
        <taxon>Vertebrata</taxon>
        <taxon>Euteleostomi</taxon>
        <taxon>Mammalia</taxon>
        <taxon>Eutheria</taxon>
        <taxon>Euarchontoglires</taxon>
        <taxon>Glires</taxon>
        <taxon>Rodentia</taxon>
        <taxon>Myomorpha</taxon>
        <taxon>Muroidea</taxon>
        <taxon>Muridae</taxon>
        <taxon>Murinae</taxon>
        <taxon>Apodemus</taxon>
        <taxon>Sylvaemus group</taxon>
    </lineage>
</organism>
<keyword id="KW-0186">Copper</keyword>
<keyword id="KW-0249">Electron transport</keyword>
<keyword id="KW-0460">Magnesium</keyword>
<keyword id="KW-0472">Membrane</keyword>
<keyword id="KW-0479">Metal-binding</keyword>
<keyword id="KW-0496">Mitochondrion</keyword>
<keyword id="KW-0999">Mitochondrion inner membrane</keyword>
<keyword id="KW-0679">Respiratory chain</keyword>
<keyword id="KW-1278">Translocase</keyword>
<keyword id="KW-0812">Transmembrane</keyword>
<keyword id="KW-1133">Transmembrane helix</keyword>
<keyword id="KW-0813">Transport</keyword>
<reference key="1">
    <citation type="journal article" date="2005" name="Mol. Phylogenet. Evol.">
        <title>Multigene phylogeny of the Old World mice, Murinae, reveals distinct geographic lineages and the declining utility of mitochondrial genes compared to nuclear genes.</title>
        <authorList>
            <person name="Steppan S.J."/>
            <person name="Adkins R.M."/>
            <person name="Spinks P.Q."/>
            <person name="Hale C."/>
        </authorList>
    </citation>
    <scope>NUCLEOTIDE SEQUENCE [GENOMIC DNA]</scope>
</reference>
<sequence>MAYPFQLGLQDATSPIMEELMNFHDHTLMIVFLISSLVLYIISLMLTTKLTHTSTMDAQEVETIWTILPAVILILIALPSLRILYMMDEINNPVLTVKTMGHQWYWSYEYTDYEDLCFDSYMIPTNDLKPGELRLLEVDNRVVLPMELPIRMLISSEDVLHSWAVPSLGLKTDAIPGRLNQATVTSNRPGLFYGQCSEICGSNHSFMPIVLEMVPLKNFENWSTSMI</sequence>
<feature type="chain" id="PRO_0000254913" description="Cytochrome c oxidase subunit 2">
    <location>
        <begin position="1"/>
        <end position="227"/>
    </location>
</feature>
<feature type="topological domain" description="Mitochondrial intermembrane" evidence="3">
    <location>
        <begin position="1"/>
        <end position="14"/>
    </location>
</feature>
<feature type="transmembrane region" description="Helical; Name=I" evidence="3">
    <location>
        <begin position="15"/>
        <end position="45"/>
    </location>
</feature>
<feature type="topological domain" description="Mitochondrial matrix" evidence="3">
    <location>
        <begin position="46"/>
        <end position="59"/>
    </location>
</feature>
<feature type="transmembrane region" description="Helical; Name=II" evidence="3">
    <location>
        <begin position="60"/>
        <end position="87"/>
    </location>
</feature>
<feature type="topological domain" description="Mitochondrial intermembrane" evidence="3">
    <location>
        <begin position="88"/>
        <end position="227"/>
    </location>
</feature>
<feature type="binding site" evidence="3">
    <location>
        <position position="161"/>
    </location>
    <ligand>
        <name>Cu cation</name>
        <dbReference type="ChEBI" id="CHEBI:23378"/>
        <label>A1</label>
    </ligand>
</feature>
<feature type="binding site" evidence="3">
    <location>
        <position position="196"/>
    </location>
    <ligand>
        <name>Cu cation</name>
        <dbReference type="ChEBI" id="CHEBI:23378"/>
        <label>A1</label>
    </ligand>
</feature>
<feature type="binding site" evidence="3">
    <location>
        <position position="196"/>
    </location>
    <ligand>
        <name>Cu cation</name>
        <dbReference type="ChEBI" id="CHEBI:23378"/>
        <label>A2</label>
    </ligand>
</feature>
<feature type="binding site" evidence="3">
    <location>
        <position position="198"/>
    </location>
    <ligand>
        <name>Cu cation</name>
        <dbReference type="ChEBI" id="CHEBI:23378"/>
        <label>A2</label>
    </ligand>
</feature>
<feature type="binding site" evidence="3">
    <location>
        <position position="198"/>
    </location>
    <ligand>
        <name>Mg(2+)</name>
        <dbReference type="ChEBI" id="CHEBI:18420"/>
        <note>ligand shared with MT-CO1</note>
    </ligand>
</feature>
<feature type="binding site" evidence="3">
    <location>
        <position position="200"/>
    </location>
    <ligand>
        <name>Cu cation</name>
        <dbReference type="ChEBI" id="CHEBI:23378"/>
        <label>A1</label>
    </ligand>
</feature>
<feature type="binding site" evidence="3">
    <location>
        <position position="200"/>
    </location>
    <ligand>
        <name>Cu cation</name>
        <dbReference type="ChEBI" id="CHEBI:23378"/>
        <label>A2</label>
    </ligand>
</feature>
<feature type="binding site" evidence="3">
    <location>
        <position position="204"/>
    </location>
    <ligand>
        <name>Cu cation</name>
        <dbReference type="ChEBI" id="CHEBI:23378"/>
        <label>A2</label>
    </ligand>
</feature>
<feature type="binding site" evidence="3">
    <location>
        <position position="207"/>
    </location>
    <ligand>
        <name>Cu cation</name>
        <dbReference type="ChEBI" id="CHEBI:23378"/>
        <label>A1</label>
    </ligand>
</feature>
<protein>
    <recommendedName>
        <fullName>Cytochrome c oxidase subunit 2</fullName>
        <ecNumber>7.1.1.9</ecNumber>
    </recommendedName>
    <alternativeName>
        <fullName>Cytochrome c oxidase polypeptide II</fullName>
    </alternativeName>
</protein>
<name>COX2_APOMY</name>
<proteinExistence type="inferred from homology"/>
<geneLocation type="mitochondrion"/>
<gene>
    <name type="primary">MT-CO2</name>
    <name type="synonym">COII</name>
    <name type="synonym">COXII</name>
    <name type="synonym">MTCO2</name>
</gene>
<accession>Q38S35</accession>